<comment type="function">
    <text evidence="1">Catalyzes the methylthiolation of N6-(dimethylallyl)adenosine (i(6)A), leading to the formation of 2-methylthio-N6-(dimethylallyl)adenosine (ms(2)i(6)A) at position 37 in tRNAs that read codons beginning with uridine.</text>
</comment>
<comment type="catalytic activity">
    <reaction evidence="1">
        <text>N(6)-dimethylallyladenosine(37) in tRNA + (sulfur carrier)-SH + AH2 + 2 S-adenosyl-L-methionine = 2-methylsulfanyl-N(6)-dimethylallyladenosine(37) in tRNA + (sulfur carrier)-H + 5'-deoxyadenosine + L-methionine + A + S-adenosyl-L-homocysteine + 2 H(+)</text>
        <dbReference type="Rhea" id="RHEA:37067"/>
        <dbReference type="Rhea" id="RHEA-COMP:10375"/>
        <dbReference type="Rhea" id="RHEA-COMP:10376"/>
        <dbReference type="Rhea" id="RHEA-COMP:14737"/>
        <dbReference type="Rhea" id="RHEA-COMP:14739"/>
        <dbReference type="ChEBI" id="CHEBI:13193"/>
        <dbReference type="ChEBI" id="CHEBI:15378"/>
        <dbReference type="ChEBI" id="CHEBI:17319"/>
        <dbReference type="ChEBI" id="CHEBI:17499"/>
        <dbReference type="ChEBI" id="CHEBI:29917"/>
        <dbReference type="ChEBI" id="CHEBI:57844"/>
        <dbReference type="ChEBI" id="CHEBI:57856"/>
        <dbReference type="ChEBI" id="CHEBI:59789"/>
        <dbReference type="ChEBI" id="CHEBI:64428"/>
        <dbReference type="ChEBI" id="CHEBI:74415"/>
        <dbReference type="ChEBI" id="CHEBI:74417"/>
        <dbReference type="EC" id="2.8.4.3"/>
    </reaction>
</comment>
<comment type="cofactor">
    <cofactor evidence="1">
        <name>[4Fe-4S] cluster</name>
        <dbReference type="ChEBI" id="CHEBI:49883"/>
    </cofactor>
    <text evidence="1">Binds 2 [4Fe-4S] clusters. One cluster is coordinated with 3 cysteines and an exchangeable S-adenosyl-L-methionine.</text>
</comment>
<comment type="subunit">
    <text evidence="1">Monomer.</text>
</comment>
<comment type="subcellular location">
    <subcellularLocation>
        <location evidence="1">Cytoplasm</location>
    </subcellularLocation>
</comment>
<comment type="similarity">
    <text evidence="1">Belongs to the methylthiotransferase family. MiaB subfamily.</text>
</comment>
<sequence>MSDDTTQIEPAMAQETSPRANTRKVFVKTYGCQMNVYDSQRMADSLAAEGYVATDTPDDADLVLLNTCHIREKASEKLYSALGRLRKMKDARAADGKELTIGVAGCVAQAEGQEILRRAPNVDLVIGPQTYHRLPNALARVRGGEKVVETDYAIEDKFEHLPAPRREETRKRGVSAFLTVQEGCDKFCTFCVVPYTRGSEVSRSVKQIVAEAERLADSGVRELTLLGQNVNAWHGEGEDGREWGLGELLFRLARIPGIAHLRYTTSHPRDMDDSLIAAHRDLRQLMPYLHLPVQSGSDRILKAMNRRHKADEYLRLIERIRNVRPDMALSGDFIVGFPGETDQDFEDTMQLVRDVNYAQAYSFKYSPRPGTPGADLDDHVEEAVKDERLQRLQALLSAQQYAFQDSMIGRKMDVLLEKPGREAGQMVGRSPWLLPVIIDDNKDRVGDIIHVKIVSTGTNSLIAQKLA</sequence>
<reference key="1">
    <citation type="journal article" date="2002" name="Proc. Natl. Acad. Sci. U.S.A.">
        <title>The genome sequence of the facultative intracellular pathogen Brucella melitensis.</title>
        <authorList>
            <person name="DelVecchio V.G."/>
            <person name="Kapatral V."/>
            <person name="Redkar R.J."/>
            <person name="Patra G."/>
            <person name="Mujer C."/>
            <person name="Los T."/>
            <person name="Ivanova N."/>
            <person name="Anderson I."/>
            <person name="Bhattacharyya A."/>
            <person name="Lykidis A."/>
            <person name="Reznik G."/>
            <person name="Jablonski L."/>
            <person name="Larsen N."/>
            <person name="D'Souza M."/>
            <person name="Bernal A."/>
            <person name="Mazur M."/>
            <person name="Goltsman E."/>
            <person name="Selkov E."/>
            <person name="Elzer P.H."/>
            <person name="Hagius S."/>
            <person name="O'Callaghan D."/>
            <person name="Letesson J.-J."/>
            <person name="Haselkorn R."/>
            <person name="Kyrpides N.C."/>
            <person name="Overbeek R."/>
        </authorList>
    </citation>
    <scope>NUCLEOTIDE SEQUENCE [LARGE SCALE GENOMIC DNA]</scope>
    <source>
        <strain>ATCC 23456 / CCUG 17765 / NCTC 10094 / 16M</strain>
    </source>
</reference>
<proteinExistence type="inferred from homology"/>
<gene>
    <name evidence="1" type="primary">miaB</name>
    <name type="ordered locus">BMEI1976</name>
</gene>
<protein>
    <recommendedName>
        <fullName evidence="1">tRNA-2-methylthio-N(6)-dimethylallyladenosine synthase</fullName>
        <ecNumber evidence="1">2.8.4.3</ecNumber>
    </recommendedName>
    <alternativeName>
        <fullName evidence="1">(Dimethylallyl)adenosine tRNA methylthiotransferase MiaB</fullName>
    </alternativeName>
    <alternativeName>
        <fullName evidence="1">tRNA-i(6)A37 methylthiotransferase</fullName>
    </alternativeName>
</protein>
<evidence type="ECO:0000255" key="1">
    <source>
        <dbReference type="HAMAP-Rule" id="MF_01864"/>
    </source>
</evidence>
<evidence type="ECO:0000255" key="2">
    <source>
        <dbReference type="PROSITE-ProRule" id="PRU01266"/>
    </source>
</evidence>
<evidence type="ECO:0000256" key="3">
    <source>
        <dbReference type="SAM" id="MobiDB-lite"/>
    </source>
</evidence>
<accession>Q8YEA2</accession>
<name>MIAB_BRUME</name>
<organism>
    <name type="scientific">Brucella melitensis biotype 1 (strain ATCC 23456 / CCUG 17765 / NCTC 10094 / 16M)</name>
    <dbReference type="NCBI Taxonomy" id="224914"/>
    <lineage>
        <taxon>Bacteria</taxon>
        <taxon>Pseudomonadati</taxon>
        <taxon>Pseudomonadota</taxon>
        <taxon>Alphaproteobacteria</taxon>
        <taxon>Hyphomicrobiales</taxon>
        <taxon>Brucellaceae</taxon>
        <taxon>Brucella/Ochrobactrum group</taxon>
        <taxon>Brucella</taxon>
    </lineage>
</organism>
<feature type="chain" id="PRO_0000374167" description="tRNA-2-methylthio-N(6)-dimethylallyladenosine synthase">
    <location>
        <begin position="1"/>
        <end position="467"/>
    </location>
</feature>
<feature type="domain" description="MTTase N-terminal" evidence="1">
    <location>
        <begin position="23"/>
        <end position="143"/>
    </location>
</feature>
<feature type="domain" description="Radical SAM core" evidence="2">
    <location>
        <begin position="170"/>
        <end position="402"/>
    </location>
</feature>
<feature type="domain" description="TRAM" evidence="1">
    <location>
        <begin position="405"/>
        <end position="467"/>
    </location>
</feature>
<feature type="region of interest" description="Disordered" evidence="3">
    <location>
        <begin position="1"/>
        <end position="20"/>
    </location>
</feature>
<feature type="binding site" evidence="1">
    <location>
        <position position="32"/>
    </location>
    <ligand>
        <name>[4Fe-4S] cluster</name>
        <dbReference type="ChEBI" id="CHEBI:49883"/>
        <label>1</label>
    </ligand>
</feature>
<feature type="binding site" evidence="1">
    <location>
        <position position="68"/>
    </location>
    <ligand>
        <name>[4Fe-4S] cluster</name>
        <dbReference type="ChEBI" id="CHEBI:49883"/>
        <label>1</label>
    </ligand>
</feature>
<feature type="binding site" evidence="1">
    <location>
        <position position="106"/>
    </location>
    <ligand>
        <name>[4Fe-4S] cluster</name>
        <dbReference type="ChEBI" id="CHEBI:49883"/>
        <label>1</label>
    </ligand>
</feature>
<feature type="binding site" evidence="1">
    <location>
        <position position="184"/>
    </location>
    <ligand>
        <name>[4Fe-4S] cluster</name>
        <dbReference type="ChEBI" id="CHEBI:49883"/>
        <label>2</label>
        <note>4Fe-4S-S-AdoMet</note>
    </ligand>
</feature>
<feature type="binding site" evidence="1">
    <location>
        <position position="188"/>
    </location>
    <ligand>
        <name>[4Fe-4S] cluster</name>
        <dbReference type="ChEBI" id="CHEBI:49883"/>
        <label>2</label>
        <note>4Fe-4S-S-AdoMet</note>
    </ligand>
</feature>
<feature type="binding site" evidence="1">
    <location>
        <position position="191"/>
    </location>
    <ligand>
        <name>[4Fe-4S] cluster</name>
        <dbReference type="ChEBI" id="CHEBI:49883"/>
        <label>2</label>
        <note>4Fe-4S-S-AdoMet</note>
    </ligand>
</feature>
<dbReference type="EC" id="2.8.4.3" evidence="1"/>
<dbReference type="EMBL" id="AE008917">
    <property type="protein sequence ID" value="AAL53157.1"/>
    <property type="molecule type" value="Genomic_DNA"/>
</dbReference>
<dbReference type="PIR" id="AB3499">
    <property type="entry name" value="AB3499"/>
</dbReference>
<dbReference type="RefSeq" id="WP_004684577.1">
    <property type="nucleotide sequence ID" value="NZ_GG703778.1"/>
</dbReference>
<dbReference type="SMR" id="Q8YEA2"/>
<dbReference type="GeneID" id="29594867"/>
<dbReference type="KEGG" id="bme:BMEI1976"/>
<dbReference type="KEGG" id="bmel:DK63_1514"/>
<dbReference type="PATRIC" id="fig|224914.52.peg.1597"/>
<dbReference type="eggNOG" id="COG0621">
    <property type="taxonomic scope" value="Bacteria"/>
</dbReference>
<dbReference type="PhylomeDB" id="Q8YEA2"/>
<dbReference type="Proteomes" id="UP000000419">
    <property type="component" value="Chromosome I"/>
</dbReference>
<dbReference type="GO" id="GO:0005829">
    <property type="term" value="C:cytosol"/>
    <property type="evidence" value="ECO:0007669"/>
    <property type="project" value="TreeGrafter"/>
</dbReference>
<dbReference type="GO" id="GO:0051539">
    <property type="term" value="F:4 iron, 4 sulfur cluster binding"/>
    <property type="evidence" value="ECO:0007669"/>
    <property type="project" value="UniProtKB-UniRule"/>
</dbReference>
<dbReference type="GO" id="GO:0046872">
    <property type="term" value="F:metal ion binding"/>
    <property type="evidence" value="ECO:0007669"/>
    <property type="project" value="UniProtKB-KW"/>
</dbReference>
<dbReference type="GO" id="GO:0035597">
    <property type="term" value="F:N6-isopentenyladenosine methylthiotransferase activity"/>
    <property type="evidence" value="ECO:0007669"/>
    <property type="project" value="TreeGrafter"/>
</dbReference>
<dbReference type="CDD" id="cd01335">
    <property type="entry name" value="Radical_SAM"/>
    <property type="match status" value="1"/>
</dbReference>
<dbReference type="FunFam" id="3.40.50.12160:FF:000003">
    <property type="entry name" value="CDK5 regulatory subunit-associated protein 1"/>
    <property type="match status" value="1"/>
</dbReference>
<dbReference type="FunFam" id="3.80.30.20:FF:000001">
    <property type="entry name" value="tRNA-2-methylthio-N(6)-dimethylallyladenosine synthase 2"/>
    <property type="match status" value="1"/>
</dbReference>
<dbReference type="Gene3D" id="3.40.50.12160">
    <property type="entry name" value="Methylthiotransferase, N-terminal domain"/>
    <property type="match status" value="1"/>
</dbReference>
<dbReference type="Gene3D" id="3.80.30.20">
    <property type="entry name" value="tm_1862 like domain"/>
    <property type="match status" value="1"/>
</dbReference>
<dbReference type="HAMAP" id="MF_01864">
    <property type="entry name" value="tRNA_metthiotr_MiaB"/>
    <property type="match status" value="1"/>
</dbReference>
<dbReference type="InterPro" id="IPR006638">
    <property type="entry name" value="Elp3/MiaA/NifB-like_rSAM"/>
</dbReference>
<dbReference type="InterPro" id="IPR005839">
    <property type="entry name" value="Methylthiotransferase"/>
</dbReference>
<dbReference type="InterPro" id="IPR020612">
    <property type="entry name" value="Methylthiotransferase_CS"/>
</dbReference>
<dbReference type="InterPro" id="IPR013848">
    <property type="entry name" value="Methylthiotransferase_N"/>
</dbReference>
<dbReference type="InterPro" id="IPR038135">
    <property type="entry name" value="Methylthiotransferase_N_sf"/>
</dbReference>
<dbReference type="InterPro" id="IPR006463">
    <property type="entry name" value="MiaB_methiolase"/>
</dbReference>
<dbReference type="InterPro" id="IPR007197">
    <property type="entry name" value="rSAM"/>
</dbReference>
<dbReference type="InterPro" id="IPR023404">
    <property type="entry name" value="rSAM_horseshoe"/>
</dbReference>
<dbReference type="InterPro" id="IPR002792">
    <property type="entry name" value="TRAM_dom"/>
</dbReference>
<dbReference type="NCBIfam" id="TIGR01574">
    <property type="entry name" value="miaB-methiolase"/>
    <property type="match status" value="1"/>
</dbReference>
<dbReference type="NCBIfam" id="TIGR00089">
    <property type="entry name" value="MiaB/RimO family radical SAM methylthiotransferase"/>
    <property type="match status" value="1"/>
</dbReference>
<dbReference type="PANTHER" id="PTHR43020">
    <property type="entry name" value="CDK5 REGULATORY SUBUNIT-ASSOCIATED PROTEIN 1"/>
    <property type="match status" value="1"/>
</dbReference>
<dbReference type="PANTHER" id="PTHR43020:SF2">
    <property type="entry name" value="MITOCHONDRIAL TRNA METHYLTHIOTRANSFERASE CDK5RAP1"/>
    <property type="match status" value="1"/>
</dbReference>
<dbReference type="Pfam" id="PF04055">
    <property type="entry name" value="Radical_SAM"/>
    <property type="match status" value="1"/>
</dbReference>
<dbReference type="Pfam" id="PF01938">
    <property type="entry name" value="TRAM"/>
    <property type="match status" value="1"/>
</dbReference>
<dbReference type="Pfam" id="PF00919">
    <property type="entry name" value="UPF0004"/>
    <property type="match status" value="1"/>
</dbReference>
<dbReference type="SFLD" id="SFLDF00273">
    <property type="entry name" value="(dimethylallyl)adenosine_tRNA"/>
    <property type="match status" value="1"/>
</dbReference>
<dbReference type="SFLD" id="SFLDG01082">
    <property type="entry name" value="B12-binding_domain_containing"/>
    <property type="match status" value="1"/>
</dbReference>
<dbReference type="SFLD" id="SFLDS00029">
    <property type="entry name" value="Radical_SAM"/>
    <property type="match status" value="1"/>
</dbReference>
<dbReference type="SMART" id="SM00729">
    <property type="entry name" value="Elp3"/>
    <property type="match status" value="1"/>
</dbReference>
<dbReference type="SUPFAM" id="SSF102114">
    <property type="entry name" value="Radical SAM enzymes"/>
    <property type="match status" value="1"/>
</dbReference>
<dbReference type="PROSITE" id="PS51449">
    <property type="entry name" value="MTTASE_N"/>
    <property type="match status" value="1"/>
</dbReference>
<dbReference type="PROSITE" id="PS01278">
    <property type="entry name" value="MTTASE_RADICAL"/>
    <property type="match status" value="1"/>
</dbReference>
<dbReference type="PROSITE" id="PS51918">
    <property type="entry name" value="RADICAL_SAM"/>
    <property type="match status" value="1"/>
</dbReference>
<dbReference type="PROSITE" id="PS50926">
    <property type="entry name" value="TRAM"/>
    <property type="match status" value="1"/>
</dbReference>
<keyword id="KW-0004">4Fe-4S</keyword>
<keyword id="KW-0963">Cytoplasm</keyword>
<keyword id="KW-0408">Iron</keyword>
<keyword id="KW-0411">Iron-sulfur</keyword>
<keyword id="KW-0479">Metal-binding</keyword>
<keyword id="KW-0949">S-adenosyl-L-methionine</keyword>
<keyword id="KW-0808">Transferase</keyword>
<keyword id="KW-0819">tRNA processing</keyword>